<evidence type="ECO:0000255" key="1">
    <source>
        <dbReference type="HAMAP-Rule" id="MF_01219"/>
    </source>
</evidence>
<proteinExistence type="inferred from homology"/>
<keyword id="KW-0328">Glycosyltransferase</keyword>
<keyword id="KW-1185">Reference proteome</keyword>
<keyword id="KW-0694">RNA-binding</keyword>
<keyword id="KW-0804">Transcription</keyword>
<keyword id="KW-0805">Transcription regulation</keyword>
<keyword id="KW-0806">Transcription termination</keyword>
<keyword id="KW-0808">Transferase</keyword>
<gene>
    <name evidence="1" type="primary">pyrR</name>
    <name type="ordered locus">BC_3891</name>
</gene>
<dbReference type="EC" id="2.4.2.9" evidence="1"/>
<dbReference type="EMBL" id="AE016877">
    <property type="protein sequence ID" value="AAP10812.1"/>
    <property type="molecule type" value="Genomic_DNA"/>
</dbReference>
<dbReference type="RefSeq" id="NP_833611.1">
    <property type="nucleotide sequence ID" value="NC_004722.1"/>
</dbReference>
<dbReference type="RefSeq" id="WP_001156491.1">
    <property type="nucleotide sequence ID" value="NZ_CP138336.1"/>
</dbReference>
<dbReference type="SMR" id="Q819R8"/>
<dbReference type="STRING" id="226900.BC_3891"/>
<dbReference type="GeneID" id="75087028"/>
<dbReference type="KEGG" id="bce:BC3891"/>
<dbReference type="PATRIC" id="fig|226900.8.peg.4013"/>
<dbReference type="HOGENOM" id="CLU_094234_2_1_9"/>
<dbReference type="OrthoDB" id="9802227at2"/>
<dbReference type="PRO" id="PR:Q819R8"/>
<dbReference type="Proteomes" id="UP000001417">
    <property type="component" value="Chromosome"/>
</dbReference>
<dbReference type="GO" id="GO:0003723">
    <property type="term" value="F:RNA binding"/>
    <property type="evidence" value="ECO:0007669"/>
    <property type="project" value="UniProtKB-UniRule"/>
</dbReference>
<dbReference type="GO" id="GO:0004845">
    <property type="term" value="F:uracil phosphoribosyltransferase activity"/>
    <property type="evidence" value="ECO:0007669"/>
    <property type="project" value="UniProtKB-UniRule"/>
</dbReference>
<dbReference type="GO" id="GO:0006353">
    <property type="term" value="P:DNA-templated transcription termination"/>
    <property type="evidence" value="ECO:0007669"/>
    <property type="project" value="UniProtKB-UniRule"/>
</dbReference>
<dbReference type="CDD" id="cd06223">
    <property type="entry name" value="PRTases_typeI"/>
    <property type="match status" value="1"/>
</dbReference>
<dbReference type="FunFam" id="3.40.50.2020:FF:000020">
    <property type="entry name" value="Bifunctional protein PyrR"/>
    <property type="match status" value="1"/>
</dbReference>
<dbReference type="Gene3D" id="3.40.50.2020">
    <property type="match status" value="1"/>
</dbReference>
<dbReference type="HAMAP" id="MF_01219">
    <property type="entry name" value="PyrR"/>
    <property type="match status" value="1"/>
</dbReference>
<dbReference type="InterPro" id="IPR000836">
    <property type="entry name" value="PRibTrfase_dom"/>
</dbReference>
<dbReference type="InterPro" id="IPR029057">
    <property type="entry name" value="PRTase-like"/>
</dbReference>
<dbReference type="InterPro" id="IPR023050">
    <property type="entry name" value="PyrR"/>
</dbReference>
<dbReference type="InterPro" id="IPR050137">
    <property type="entry name" value="PyrR_bifunctional"/>
</dbReference>
<dbReference type="NCBIfam" id="NF003545">
    <property type="entry name" value="PRK05205.1-1"/>
    <property type="match status" value="1"/>
</dbReference>
<dbReference type="NCBIfam" id="NF003547">
    <property type="entry name" value="PRK05205.1-3"/>
    <property type="match status" value="1"/>
</dbReference>
<dbReference type="NCBIfam" id="NF003548">
    <property type="entry name" value="PRK05205.1-4"/>
    <property type="match status" value="1"/>
</dbReference>
<dbReference type="NCBIfam" id="NF003549">
    <property type="entry name" value="PRK05205.1-5"/>
    <property type="match status" value="1"/>
</dbReference>
<dbReference type="PANTHER" id="PTHR11608">
    <property type="entry name" value="BIFUNCTIONAL PROTEIN PYRR"/>
    <property type="match status" value="1"/>
</dbReference>
<dbReference type="PANTHER" id="PTHR11608:SF0">
    <property type="entry name" value="BIFUNCTIONAL PROTEIN PYRR"/>
    <property type="match status" value="1"/>
</dbReference>
<dbReference type="Pfam" id="PF00156">
    <property type="entry name" value="Pribosyltran"/>
    <property type="match status" value="1"/>
</dbReference>
<dbReference type="SUPFAM" id="SSF53271">
    <property type="entry name" value="PRTase-like"/>
    <property type="match status" value="1"/>
</dbReference>
<feature type="chain" id="PRO_1000053823" description="Bifunctional protein PyrR">
    <location>
        <begin position="1"/>
        <end position="180"/>
    </location>
</feature>
<feature type="short sequence motif" description="PRPP-binding" evidence="1">
    <location>
        <begin position="101"/>
        <end position="113"/>
    </location>
</feature>
<reference key="1">
    <citation type="journal article" date="2003" name="Nature">
        <title>Genome sequence of Bacillus cereus and comparative analysis with Bacillus anthracis.</title>
        <authorList>
            <person name="Ivanova N."/>
            <person name="Sorokin A."/>
            <person name="Anderson I."/>
            <person name="Galleron N."/>
            <person name="Candelon B."/>
            <person name="Kapatral V."/>
            <person name="Bhattacharyya A."/>
            <person name="Reznik G."/>
            <person name="Mikhailova N."/>
            <person name="Lapidus A."/>
            <person name="Chu L."/>
            <person name="Mazur M."/>
            <person name="Goltsman E."/>
            <person name="Larsen N."/>
            <person name="D'Souza M."/>
            <person name="Walunas T."/>
            <person name="Grechkin Y."/>
            <person name="Pusch G."/>
            <person name="Haselkorn R."/>
            <person name="Fonstein M."/>
            <person name="Ehrlich S.D."/>
            <person name="Overbeek R."/>
            <person name="Kyrpides N.C."/>
        </authorList>
    </citation>
    <scope>NUCLEOTIDE SEQUENCE [LARGE SCALE GENOMIC DNA]</scope>
    <source>
        <strain>ATCC 14579 / DSM 31 / CCUG 7414 / JCM 2152 / NBRC 15305 / NCIMB 9373 / NCTC 2599 / NRRL B-3711</strain>
    </source>
</reference>
<name>PYRR_BACCR</name>
<protein>
    <recommendedName>
        <fullName evidence="1">Bifunctional protein PyrR</fullName>
    </recommendedName>
    <domain>
        <recommendedName>
            <fullName evidence="1">Pyrimidine operon regulatory protein</fullName>
        </recommendedName>
    </domain>
    <domain>
        <recommendedName>
            <fullName evidence="1">Uracil phosphoribosyltransferase</fullName>
            <shortName evidence="1">UPRTase</shortName>
            <ecNumber evidence="1">2.4.2.9</ecNumber>
        </recommendedName>
    </domain>
</protein>
<accession>Q819R8</accession>
<organism>
    <name type="scientific">Bacillus cereus (strain ATCC 14579 / DSM 31 / CCUG 7414 / JCM 2152 / NBRC 15305 / NCIMB 9373 / NCTC 2599 / NRRL B-3711)</name>
    <dbReference type="NCBI Taxonomy" id="226900"/>
    <lineage>
        <taxon>Bacteria</taxon>
        <taxon>Bacillati</taxon>
        <taxon>Bacillota</taxon>
        <taxon>Bacilli</taxon>
        <taxon>Bacillales</taxon>
        <taxon>Bacillaceae</taxon>
        <taxon>Bacillus</taxon>
        <taxon>Bacillus cereus group</taxon>
    </lineage>
</organism>
<sequence>MQEKAVVLDDQMIRRALTRISHEIVERNKGVDNCVLVGIKTRGIFIAQRLAERIGQIEGKEMEVGELDITLYRDDLTLQSKNKEPLVKGSDIPVDITKKKVILVDDVLYTGRTVRAAMDALMDLGRPSQIQLAVLVDRGHRELPIRADYVGKNIPTSSEERIEVDLQETDQQDRVSIYDK</sequence>
<comment type="function">
    <text evidence="1">Regulates transcriptional attenuation of the pyrimidine nucleotide (pyr) operon by binding in a uridine-dependent manner to specific sites on pyr mRNA. This disrupts an antiterminator hairpin in the RNA and favors formation of a downstream transcription terminator, leading to a reduced expression of downstream genes.</text>
</comment>
<comment type="function">
    <text evidence="1">Also displays a weak uracil phosphoribosyltransferase activity which is not physiologically significant.</text>
</comment>
<comment type="catalytic activity">
    <reaction evidence="1">
        <text>UMP + diphosphate = 5-phospho-alpha-D-ribose 1-diphosphate + uracil</text>
        <dbReference type="Rhea" id="RHEA:13017"/>
        <dbReference type="ChEBI" id="CHEBI:17568"/>
        <dbReference type="ChEBI" id="CHEBI:33019"/>
        <dbReference type="ChEBI" id="CHEBI:57865"/>
        <dbReference type="ChEBI" id="CHEBI:58017"/>
        <dbReference type="EC" id="2.4.2.9"/>
    </reaction>
</comment>
<comment type="subunit">
    <text evidence="1">Homodimer and homohexamer; in equilibrium.</text>
</comment>
<comment type="similarity">
    <text evidence="1">Belongs to the purine/pyrimidine phosphoribosyltransferase family. PyrR subfamily.</text>
</comment>